<evidence type="ECO:0000250" key="1"/>
<evidence type="ECO:0000255" key="2">
    <source>
        <dbReference type="PROSITE-ProRule" id="PRU00200"/>
    </source>
</evidence>
<evidence type="ECO:0000305" key="3"/>
<organism>
    <name type="scientific">Cryptococcus neoformans var. neoformans serotype D (strain B-3501A)</name>
    <name type="common">Filobasidiella neoformans</name>
    <dbReference type="NCBI Taxonomy" id="283643"/>
    <lineage>
        <taxon>Eukaryota</taxon>
        <taxon>Fungi</taxon>
        <taxon>Dikarya</taxon>
        <taxon>Basidiomycota</taxon>
        <taxon>Agaricomycotina</taxon>
        <taxon>Tremellomycetes</taxon>
        <taxon>Tremellales</taxon>
        <taxon>Cryptococcaceae</taxon>
        <taxon>Cryptococcus</taxon>
        <taxon>Cryptococcus neoformans species complex</taxon>
    </lineage>
</organism>
<proteinExistence type="inferred from homology"/>
<name>DENR_CRYNB</name>
<reference key="1">
    <citation type="journal article" date="2005" name="Science">
        <title>The genome of the basidiomycetous yeast and human pathogen Cryptococcus neoformans.</title>
        <authorList>
            <person name="Loftus B.J."/>
            <person name="Fung E."/>
            <person name="Roncaglia P."/>
            <person name="Rowley D."/>
            <person name="Amedeo P."/>
            <person name="Bruno D."/>
            <person name="Vamathevan J."/>
            <person name="Miranda M."/>
            <person name="Anderson I.J."/>
            <person name="Fraser J.A."/>
            <person name="Allen J.E."/>
            <person name="Bosdet I.E."/>
            <person name="Brent M.R."/>
            <person name="Chiu R."/>
            <person name="Doering T.L."/>
            <person name="Donlin M.J."/>
            <person name="D'Souza C.A."/>
            <person name="Fox D.S."/>
            <person name="Grinberg V."/>
            <person name="Fu J."/>
            <person name="Fukushima M."/>
            <person name="Haas B.J."/>
            <person name="Huang J.C."/>
            <person name="Janbon G."/>
            <person name="Jones S.J.M."/>
            <person name="Koo H.L."/>
            <person name="Krzywinski M.I."/>
            <person name="Kwon-Chung K.J."/>
            <person name="Lengeler K.B."/>
            <person name="Maiti R."/>
            <person name="Marra M.A."/>
            <person name="Marra R.E."/>
            <person name="Mathewson C.A."/>
            <person name="Mitchell T.G."/>
            <person name="Pertea M."/>
            <person name="Riggs F.R."/>
            <person name="Salzberg S.L."/>
            <person name="Schein J.E."/>
            <person name="Shvartsbeyn A."/>
            <person name="Shin H."/>
            <person name="Shumway M."/>
            <person name="Specht C.A."/>
            <person name="Suh B.B."/>
            <person name="Tenney A."/>
            <person name="Utterback T.R."/>
            <person name="Wickes B.L."/>
            <person name="Wortman J.R."/>
            <person name="Wye N.H."/>
            <person name="Kronstad J.W."/>
            <person name="Lodge J.K."/>
            <person name="Heitman J."/>
            <person name="Davis R.W."/>
            <person name="Fraser C.M."/>
            <person name="Hyman R.W."/>
        </authorList>
    </citation>
    <scope>NUCLEOTIDE SEQUENCE [LARGE SCALE GENOMIC DNA]</scope>
    <source>
        <strain>B-3501A</strain>
    </source>
</reference>
<dbReference type="EMBL" id="AAEY01000024">
    <property type="protein sequence ID" value="EAL20708.1"/>
    <property type="molecule type" value="Genomic_DNA"/>
</dbReference>
<dbReference type="RefSeq" id="XP_775355.1">
    <property type="nucleotide sequence ID" value="XM_770262.1"/>
</dbReference>
<dbReference type="SMR" id="P0CR81"/>
<dbReference type="EnsemblFungi" id="AAW43497">
    <property type="protein sequence ID" value="AAW43497"/>
    <property type="gene ID" value="CNE00790"/>
</dbReference>
<dbReference type="GeneID" id="4936078"/>
<dbReference type="KEGG" id="cnb:CNBE0730"/>
<dbReference type="VEuPathDB" id="FungiDB:CNBE0730"/>
<dbReference type="HOGENOM" id="CLU_073511_0_1_1"/>
<dbReference type="OrthoDB" id="8124at5206"/>
<dbReference type="GO" id="GO:0005737">
    <property type="term" value="C:cytoplasm"/>
    <property type="evidence" value="ECO:0007669"/>
    <property type="project" value="UniProtKB-SubCell"/>
</dbReference>
<dbReference type="GO" id="GO:1990904">
    <property type="term" value="C:ribonucleoprotein complex"/>
    <property type="evidence" value="ECO:0007669"/>
    <property type="project" value="UniProtKB-KW"/>
</dbReference>
<dbReference type="GO" id="GO:0005840">
    <property type="term" value="C:ribosome"/>
    <property type="evidence" value="ECO:0007669"/>
    <property type="project" value="UniProtKB-KW"/>
</dbReference>
<dbReference type="GO" id="GO:0003729">
    <property type="term" value="F:mRNA binding"/>
    <property type="evidence" value="ECO:0007669"/>
    <property type="project" value="TreeGrafter"/>
</dbReference>
<dbReference type="GO" id="GO:0003743">
    <property type="term" value="F:translation initiation factor activity"/>
    <property type="evidence" value="ECO:0007669"/>
    <property type="project" value="InterPro"/>
</dbReference>
<dbReference type="GO" id="GO:0001731">
    <property type="term" value="P:formation of translation preinitiation complex"/>
    <property type="evidence" value="ECO:0007669"/>
    <property type="project" value="TreeGrafter"/>
</dbReference>
<dbReference type="GO" id="GO:0000184">
    <property type="term" value="P:nuclear-transcribed mRNA catabolic process, nonsense-mediated decay"/>
    <property type="evidence" value="ECO:0007669"/>
    <property type="project" value="EnsemblFungi"/>
</dbReference>
<dbReference type="GO" id="GO:0032790">
    <property type="term" value="P:ribosome disassembly"/>
    <property type="evidence" value="ECO:0007669"/>
    <property type="project" value="EnsemblFungi"/>
</dbReference>
<dbReference type="GO" id="GO:0002188">
    <property type="term" value="P:translation reinitiation"/>
    <property type="evidence" value="ECO:0007669"/>
    <property type="project" value="TreeGrafter"/>
</dbReference>
<dbReference type="CDD" id="cd11607">
    <property type="entry name" value="DENR_C"/>
    <property type="match status" value="1"/>
</dbReference>
<dbReference type="FunFam" id="3.30.780.10:FF:000018">
    <property type="entry name" value="Translation machinery-associated protein 22"/>
    <property type="match status" value="1"/>
</dbReference>
<dbReference type="Gene3D" id="3.30.780.10">
    <property type="entry name" value="SUI1-like domain"/>
    <property type="match status" value="1"/>
</dbReference>
<dbReference type="InterPro" id="IPR050318">
    <property type="entry name" value="DENR/SUI1_TIF"/>
</dbReference>
<dbReference type="InterPro" id="IPR046447">
    <property type="entry name" value="DENR_C"/>
</dbReference>
<dbReference type="InterPro" id="IPR005873">
    <property type="entry name" value="DENR_eukaryotes"/>
</dbReference>
<dbReference type="InterPro" id="IPR048517">
    <property type="entry name" value="DENR_N"/>
</dbReference>
<dbReference type="InterPro" id="IPR001950">
    <property type="entry name" value="SUI1"/>
</dbReference>
<dbReference type="InterPro" id="IPR036877">
    <property type="entry name" value="SUI1_dom_sf"/>
</dbReference>
<dbReference type="NCBIfam" id="TIGR01159">
    <property type="entry name" value="DRP1"/>
    <property type="match status" value="1"/>
</dbReference>
<dbReference type="PANTHER" id="PTHR12789:SF0">
    <property type="entry name" value="DENSITY-REGULATED PROTEIN"/>
    <property type="match status" value="1"/>
</dbReference>
<dbReference type="PANTHER" id="PTHR12789">
    <property type="entry name" value="DENSITY-REGULATED PROTEIN HOMOLOG"/>
    <property type="match status" value="1"/>
</dbReference>
<dbReference type="Pfam" id="PF21023">
    <property type="entry name" value="DENR_N"/>
    <property type="match status" value="1"/>
</dbReference>
<dbReference type="Pfam" id="PF01253">
    <property type="entry name" value="SUI1"/>
    <property type="match status" value="1"/>
</dbReference>
<dbReference type="SUPFAM" id="SSF55159">
    <property type="entry name" value="eIF1-like"/>
    <property type="match status" value="1"/>
</dbReference>
<dbReference type="PROSITE" id="PS50296">
    <property type="entry name" value="SUI1"/>
    <property type="match status" value="1"/>
</dbReference>
<feature type="chain" id="PRO_0000410302" description="Translation machinery-associated protein 22">
    <location>
        <begin position="1"/>
        <end position="198"/>
    </location>
</feature>
<feature type="domain" description="SUI1" evidence="2">
    <location>
        <begin position="100"/>
        <end position="171"/>
    </location>
</feature>
<gene>
    <name type="primary">TMA22</name>
    <name type="ordered locus">CNBE0730</name>
</gene>
<keyword id="KW-0963">Cytoplasm</keyword>
<keyword id="KW-0687">Ribonucleoprotein</keyword>
<keyword id="KW-0689">Ribosomal protein</keyword>
<protein>
    <recommendedName>
        <fullName>Translation machinery-associated protein 22</fullName>
    </recommendedName>
</protein>
<comment type="subunit">
    <text evidence="1">Interacts with the 40S ribosomal subunit.</text>
</comment>
<comment type="subcellular location">
    <subcellularLocation>
        <location evidence="1">Cytoplasm</location>
    </subcellularLocation>
</comment>
<comment type="domain">
    <text>The SUI1 domain may be involved in RNA binding.</text>
</comment>
<comment type="similarity">
    <text evidence="3">Belongs to the DENR family.</text>
</comment>
<accession>P0CR81</accession>
<accession>Q55SW3</accession>
<accession>Q5KH97</accession>
<sequence>MASAVSGPSTKQVHPFYCAVCSLPTEYCEFGPSVSKCKAWLEEQDKDEYERVWGEGALASRIGTLSLDKQEKLEADAAKLEKKAAKKAEAEAKKKEQTKIIIKRSERTKRKHQTHIQNLELFGVDLKKAAKQFAGKFATGSSVSKTPQGEEEIVIQGDVGDEIVEMIRQQVGALKGVPADQITRVEVKKKKEAEEPAA</sequence>